<evidence type="ECO:0000250" key="1"/>
<evidence type="ECO:0000255" key="2"/>
<evidence type="ECO:0000305" key="3"/>
<sequence>MNALFIIIFMIVVGAIIGGITNVIAIRMLFHPFKPYYIFKFRVPFTPGLIPKRREEIATKIGQVIEEHLLTETLINEKLKSEQSQQAIESMIQQQLQKLTKDQLSIKQITSQIDIDLEQVLQTNGNQYIESQLNNYYTKHQNQTIASLLPNQLVTFLNQHVDNATDLLCDRARNYLSSAKGTQDINDMLDTFFNEKGKLIGMLQMFMTKESIADRIQQELIRLTSHPKARTIVTSLITNEYQTFKDKPLNELLDASQFNEIAENLSVYVTTYASKQANKPVVTLMPQFVDYLEGQLSSKLANLIIEKLSIHLSTIMKKVDLRGLIEEQINTFDLDYIEKLIIEIANKELKLIMSLGFILGGIIGFFQGLVAIFV</sequence>
<dbReference type="EMBL" id="AP009351">
    <property type="protein sequence ID" value="BAF68010.1"/>
    <property type="molecule type" value="Genomic_DNA"/>
</dbReference>
<dbReference type="RefSeq" id="WP_000992527.1">
    <property type="nucleotide sequence ID" value="NZ_JBBIAE010000013.1"/>
</dbReference>
<dbReference type="SMR" id="A6QI28"/>
<dbReference type="KEGG" id="sae:NWMN_1738"/>
<dbReference type="HOGENOM" id="CLU_042384_0_0_9"/>
<dbReference type="Proteomes" id="UP000006386">
    <property type="component" value="Chromosome"/>
</dbReference>
<dbReference type="GO" id="GO:0005886">
    <property type="term" value="C:plasma membrane"/>
    <property type="evidence" value="ECO:0007669"/>
    <property type="project" value="UniProtKB-SubCell"/>
</dbReference>
<dbReference type="InterPro" id="IPR007383">
    <property type="entry name" value="DUF445"/>
</dbReference>
<dbReference type="InterPro" id="IPR016991">
    <property type="entry name" value="UCP032178"/>
</dbReference>
<dbReference type="PANTHER" id="PTHR35791">
    <property type="entry name" value="UPF0754 MEMBRANE PROTEIN YHEB"/>
    <property type="match status" value="1"/>
</dbReference>
<dbReference type="PANTHER" id="PTHR35791:SF1">
    <property type="entry name" value="UPF0754 MEMBRANE PROTEIN YHEB"/>
    <property type="match status" value="1"/>
</dbReference>
<dbReference type="Pfam" id="PF04286">
    <property type="entry name" value="DUF445"/>
    <property type="match status" value="1"/>
</dbReference>
<dbReference type="PIRSF" id="PIRSF032178">
    <property type="entry name" value="UCP032178"/>
    <property type="match status" value="1"/>
</dbReference>
<name>Y1738_STAAE</name>
<proteinExistence type="inferred from homology"/>
<reference key="1">
    <citation type="journal article" date="2008" name="J. Bacteriol.">
        <title>Genome sequence of Staphylococcus aureus strain Newman and comparative analysis of staphylococcal genomes: polymorphism and evolution of two major pathogenicity islands.</title>
        <authorList>
            <person name="Baba T."/>
            <person name="Bae T."/>
            <person name="Schneewind O."/>
            <person name="Takeuchi F."/>
            <person name="Hiramatsu K."/>
        </authorList>
    </citation>
    <scope>NUCLEOTIDE SEQUENCE [LARGE SCALE GENOMIC DNA]</scope>
    <source>
        <strain>Newman</strain>
    </source>
</reference>
<gene>
    <name type="ordered locus">NWMN_1738</name>
</gene>
<organism>
    <name type="scientific">Staphylococcus aureus (strain Newman)</name>
    <dbReference type="NCBI Taxonomy" id="426430"/>
    <lineage>
        <taxon>Bacteria</taxon>
        <taxon>Bacillati</taxon>
        <taxon>Bacillota</taxon>
        <taxon>Bacilli</taxon>
        <taxon>Bacillales</taxon>
        <taxon>Staphylococcaceae</taxon>
        <taxon>Staphylococcus</taxon>
    </lineage>
</organism>
<accession>A6QI28</accession>
<comment type="subcellular location">
    <subcellularLocation>
        <location evidence="1">Cell membrane</location>
        <topology evidence="1">Multi-pass membrane protein</topology>
    </subcellularLocation>
</comment>
<comment type="similarity">
    <text evidence="3">Belongs to the UPF0754 family.</text>
</comment>
<keyword id="KW-1003">Cell membrane</keyword>
<keyword id="KW-0472">Membrane</keyword>
<keyword id="KW-0812">Transmembrane</keyword>
<keyword id="KW-1133">Transmembrane helix</keyword>
<feature type="chain" id="PRO_0000388315" description="UPF0754 membrane protein NWMN_1738">
    <location>
        <begin position="1"/>
        <end position="374"/>
    </location>
</feature>
<feature type="transmembrane region" description="Helical" evidence="2">
    <location>
        <begin position="4"/>
        <end position="24"/>
    </location>
</feature>
<feature type="transmembrane region" description="Helical" evidence="2">
    <location>
        <begin position="354"/>
        <end position="374"/>
    </location>
</feature>
<protein>
    <recommendedName>
        <fullName>UPF0754 membrane protein NWMN_1738</fullName>
    </recommendedName>
</protein>